<dbReference type="EMBL" id="AE017223">
    <property type="protein sequence ID" value="AAX74561.1"/>
    <property type="molecule type" value="Genomic_DNA"/>
</dbReference>
<dbReference type="RefSeq" id="WP_002964347.1">
    <property type="nucleotide sequence ID" value="NC_006932.1"/>
</dbReference>
<dbReference type="SMR" id="Q57CS3"/>
<dbReference type="EnsemblBacteria" id="AAX74561">
    <property type="protein sequence ID" value="AAX74561"/>
    <property type="gene ID" value="BruAb1_1223"/>
</dbReference>
<dbReference type="GeneID" id="93016454"/>
<dbReference type="KEGG" id="bmb:BruAb1_1223"/>
<dbReference type="HOGENOM" id="CLU_065464_1_2_5"/>
<dbReference type="Proteomes" id="UP000000540">
    <property type="component" value="Chromosome I"/>
</dbReference>
<dbReference type="GO" id="GO:0022625">
    <property type="term" value="C:cytosolic large ribosomal subunit"/>
    <property type="evidence" value="ECO:0007669"/>
    <property type="project" value="TreeGrafter"/>
</dbReference>
<dbReference type="GO" id="GO:0019843">
    <property type="term" value="F:rRNA binding"/>
    <property type="evidence" value="ECO:0007669"/>
    <property type="project" value="UniProtKB-UniRule"/>
</dbReference>
<dbReference type="GO" id="GO:0003735">
    <property type="term" value="F:structural constituent of ribosome"/>
    <property type="evidence" value="ECO:0007669"/>
    <property type="project" value="InterPro"/>
</dbReference>
<dbReference type="GO" id="GO:0002181">
    <property type="term" value="P:cytoplasmic translation"/>
    <property type="evidence" value="ECO:0007669"/>
    <property type="project" value="TreeGrafter"/>
</dbReference>
<dbReference type="FunFam" id="3.90.930.12:FF:000001">
    <property type="entry name" value="50S ribosomal protein L6"/>
    <property type="match status" value="1"/>
</dbReference>
<dbReference type="Gene3D" id="3.90.930.12">
    <property type="entry name" value="Ribosomal protein L6, alpha-beta domain"/>
    <property type="match status" value="2"/>
</dbReference>
<dbReference type="HAMAP" id="MF_01365_B">
    <property type="entry name" value="Ribosomal_uL6_B"/>
    <property type="match status" value="1"/>
</dbReference>
<dbReference type="InterPro" id="IPR000702">
    <property type="entry name" value="Ribosomal_uL6-like"/>
</dbReference>
<dbReference type="InterPro" id="IPR036789">
    <property type="entry name" value="Ribosomal_uL6-like_a/b-dom_sf"/>
</dbReference>
<dbReference type="InterPro" id="IPR020040">
    <property type="entry name" value="Ribosomal_uL6_a/b-dom"/>
</dbReference>
<dbReference type="InterPro" id="IPR019906">
    <property type="entry name" value="Ribosomal_uL6_bac-type"/>
</dbReference>
<dbReference type="InterPro" id="IPR002358">
    <property type="entry name" value="Ribosomal_uL6_CS"/>
</dbReference>
<dbReference type="NCBIfam" id="TIGR03654">
    <property type="entry name" value="L6_bact"/>
    <property type="match status" value="1"/>
</dbReference>
<dbReference type="PANTHER" id="PTHR11655">
    <property type="entry name" value="60S/50S RIBOSOMAL PROTEIN L6/L9"/>
    <property type="match status" value="1"/>
</dbReference>
<dbReference type="PANTHER" id="PTHR11655:SF14">
    <property type="entry name" value="LARGE RIBOSOMAL SUBUNIT PROTEIN UL6M"/>
    <property type="match status" value="1"/>
</dbReference>
<dbReference type="Pfam" id="PF00347">
    <property type="entry name" value="Ribosomal_L6"/>
    <property type="match status" value="2"/>
</dbReference>
<dbReference type="PIRSF" id="PIRSF002162">
    <property type="entry name" value="Ribosomal_L6"/>
    <property type="match status" value="1"/>
</dbReference>
<dbReference type="PRINTS" id="PR00059">
    <property type="entry name" value="RIBOSOMALL6"/>
</dbReference>
<dbReference type="SUPFAM" id="SSF56053">
    <property type="entry name" value="Ribosomal protein L6"/>
    <property type="match status" value="2"/>
</dbReference>
<dbReference type="PROSITE" id="PS00525">
    <property type="entry name" value="RIBOSOMAL_L6_1"/>
    <property type="match status" value="1"/>
</dbReference>
<keyword id="KW-0687">Ribonucleoprotein</keyword>
<keyword id="KW-0689">Ribosomal protein</keyword>
<keyword id="KW-0694">RNA-binding</keyword>
<keyword id="KW-0699">rRNA-binding</keyword>
<sequence>MSRIGKKPVPVPAGVTGSVEGQTVKAKGAKGELSFVVHDEVLVKMEDGAVRVDPRDQSKEARSKWGMSRTMISNIFVGVKDGFEKKLEISGVGYRAAMQGKNLQLSLGFSHEVVYDVPAGITVAVPKPTEIVVTGIDKQQVGQVAAEIREYRGPEPYKGKGVKYAGEKIVRKEGKKK</sequence>
<accession>Q57CS3</accession>
<organism>
    <name type="scientific">Brucella abortus biovar 1 (strain 9-941)</name>
    <dbReference type="NCBI Taxonomy" id="262698"/>
    <lineage>
        <taxon>Bacteria</taxon>
        <taxon>Pseudomonadati</taxon>
        <taxon>Pseudomonadota</taxon>
        <taxon>Alphaproteobacteria</taxon>
        <taxon>Hyphomicrobiales</taxon>
        <taxon>Brucellaceae</taxon>
        <taxon>Brucella/Ochrobactrum group</taxon>
        <taxon>Brucella</taxon>
    </lineage>
</organism>
<reference key="1">
    <citation type="journal article" date="2005" name="J. Bacteriol.">
        <title>Completion of the genome sequence of Brucella abortus and comparison to the highly similar genomes of Brucella melitensis and Brucella suis.</title>
        <authorList>
            <person name="Halling S.M."/>
            <person name="Peterson-Burch B.D."/>
            <person name="Bricker B.J."/>
            <person name="Zuerner R.L."/>
            <person name="Qing Z."/>
            <person name="Li L.-L."/>
            <person name="Kapur V."/>
            <person name="Alt D.P."/>
            <person name="Olsen S.C."/>
        </authorList>
    </citation>
    <scope>NUCLEOTIDE SEQUENCE [LARGE SCALE GENOMIC DNA]</scope>
    <source>
        <strain>9-941</strain>
    </source>
</reference>
<proteinExistence type="inferred from homology"/>
<name>RL6_BRUAB</name>
<gene>
    <name evidence="1" type="primary">rplF</name>
    <name type="ordered locus">BruAb1_1223</name>
</gene>
<evidence type="ECO:0000255" key="1">
    <source>
        <dbReference type="HAMAP-Rule" id="MF_01365"/>
    </source>
</evidence>
<evidence type="ECO:0000305" key="2"/>
<feature type="chain" id="PRO_0000265226" description="Large ribosomal subunit protein uL6">
    <location>
        <begin position="1"/>
        <end position="177"/>
    </location>
</feature>
<comment type="function">
    <text evidence="1">This protein binds to the 23S rRNA, and is important in its secondary structure. It is located near the subunit interface in the base of the L7/L12 stalk, and near the tRNA binding site of the peptidyltransferase center.</text>
</comment>
<comment type="subunit">
    <text evidence="1">Part of the 50S ribosomal subunit.</text>
</comment>
<comment type="similarity">
    <text evidence="1">Belongs to the universal ribosomal protein uL6 family.</text>
</comment>
<protein>
    <recommendedName>
        <fullName evidence="1">Large ribosomal subunit protein uL6</fullName>
    </recommendedName>
    <alternativeName>
        <fullName evidence="2">50S ribosomal protein L6</fullName>
    </alternativeName>
</protein>